<protein>
    <recommendedName>
        <fullName evidence="1">Ribosome maturation factor RimP</fullName>
    </recommendedName>
</protein>
<evidence type="ECO:0000255" key="1">
    <source>
        <dbReference type="HAMAP-Rule" id="MF_01077"/>
    </source>
</evidence>
<feature type="chain" id="PRO_1000064793" description="Ribosome maturation factor RimP">
    <location>
        <begin position="1"/>
        <end position="152"/>
    </location>
</feature>
<proteinExistence type="inferred from homology"/>
<reference key="1">
    <citation type="submission" date="2007-08" db="EMBL/GenBank/DDBJ databases">
        <title>Complete sequence of Thermotoga lettingae TMO.</title>
        <authorList>
            <consortium name="US DOE Joint Genome Institute"/>
            <person name="Copeland A."/>
            <person name="Lucas S."/>
            <person name="Lapidus A."/>
            <person name="Barry K."/>
            <person name="Glavina del Rio T."/>
            <person name="Dalin E."/>
            <person name="Tice H."/>
            <person name="Pitluck S."/>
            <person name="Foster B."/>
            <person name="Bruce D."/>
            <person name="Schmutz J."/>
            <person name="Larimer F."/>
            <person name="Land M."/>
            <person name="Hauser L."/>
            <person name="Kyrpides N."/>
            <person name="Mikhailova N."/>
            <person name="Nelson K."/>
            <person name="Gogarten J.P."/>
            <person name="Noll K."/>
            <person name="Richardson P."/>
        </authorList>
    </citation>
    <scope>NUCLEOTIDE SEQUENCE [LARGE SCALE GENOMIC DNA]</scope>
    <source>
        <strain>ATCC BAA-301 / DSM 14385 / NBRC 107922 / TMO</strain>
    </source>
</reference>
<accession>A8F3W0</accession>
<gene>
    <name evidence="1" type="primary">rimP</name>
    <name type="ordered locus">Tlet_0274</name>
</gene>
<name>RIMP_PSELT</name>
<dbReference type="EMBL" id="CP000812">
    <property type="protein sequence ID" value="ABV32844.1"/>
    <property type="molecule type" value="Genomic_DNA"/>
</dbReference>
<dbReference type="SMR" id="A8F3W0"/>
<dbReference type="STRING" id="416591.Tlet_0274"/>
<dbReference type="KEGG" id="tle:Tlet_0274"/>
<dbReference type="eggNOG" id="COG0779">
    <property type="taxonomic scope" value="Bacteria"/>
</dbReference>
<dbReference type="HOGENOM" id="CLU_070525_3_0_0"/>
<dbReference type="Proteomes" id="UP000002016">
    <property type="component" value="Chromosome"/>
</dbReference>
<dbReference type="GO" id="GO:0005829">
    <property type="term" value="C:cytosol"/>
    <property type="evidence" value="ECO:0007669"/>
    <property type="project" value="TreeGrafter"/>
</dbReference>
<dbReference type="GO" id="GO:0000028">
    <property type="term" value="P:ribosomal small subunit assembly"/>
    <property type="evidence" value="ECO:0007669"/>
    <property type="project" value="TreeGrafter"/>
</dbReference>
<dbReference type="GO" id="GO:0006412">
    <property type="term" value="P:translation"/>
    <property type="evidence" value="ECO:0007669"/>
    <property type="project" value="TreeGrafter"/>
</dbReference>
<dbReference type="CDD" id="cd01734">
    <property type="entry name" value="YlxS_C"/>
    <property type="match status" value="1"/>
</dbReference>
<dbReference type="FunFam" id="3.30.300.70:FF:000001">
    <property type="entry name" value="Ribosome maturation factor RimP"/>
    <property type="match status" value="1"/>
</dbReference>
<dbReference type="Gene3D" id="3.30.300.70">
    <property type="entry name" value="RimP-like superfamily, N-terminal"/>
    <property type="match status" value="1"/>
</dbReference>
<dbReference type="HAMAP" id="MF_01077">
    <property type="entry name" value="RimP"/>
    <property type="match status" value="1"/>
</dbReference>
<dbReference type="InterPro" id="IPR003728">
    <property type="entry name" value="Ribosome_maturation_RimP"/>
</dbReference>
<dbReference type="InterPro" id="IPR028998">
    <property type="entry name" value="RimP_C"/>
</dbReference>
<dbReference type="InterPro" id="IPR036847">
    <property type="entry name" value="RimP_C_sf"/>
</dbReference>
<dbReference type="InterPro" id="IPR028989">
    <property type="entry name" value="RimP_N"/>
</dbReference>
<dbReference type="InterPro" id="IPR035956">
    <property type="entry name" value="RimP_N_sf"/>
</dbReference>
<dbReference type="NCBIfam" id="NF011231">
    <property type="entry name" value="PRK14638.1"/>
    <property type="match status" value="1"/>
</dbReference>
<dbReference type="PANTHER" id="PTHR33867">
    <property type="entry name" value="RIBOSOME MATURATION FACTOR RIMP"/>
    <property type="match status" value="1"/>
</dbReference>
<dbReference type="PANTHER" id="PTHR33867:SF1">
    <property type="entry name" value="RIBOSOME MATURATION FACTOR RIMP"/>
    <property type="match status" value="1"/>
</dbReference>
<dbReference type="Pfam" id="PF17384">
    <property type="entry name" value="DUF150_C"/>
    <property type="match status" value="1"/>
</dbReference>
<dbReference type="Pfam" id="PF02576">
    <property type="entry name" value="RimP_N"/>
    <property type="match status" value="1"/>
</dbReference>
<dbReference type="SUPFAM" id="SSF74942">
    <property type="entry name" value="YhbC-like, C-terminal domain"/>
    <property type="match status" value="1"/>
</dbReference>
<dbReference type="SUPFAM" id="SSF75420">
    <property type="entry name" value="YhbC-like, N-terminal domain"/>
    <property type="match status" value="1"/>
</dbReference>
<sequence length="152" mass="17537">MILVKKIIDKLRPVVIDILSQLGLELFDITLRRERRKLVLRVVIDDPENYVSIRQCEIVSSQIGNYLDEADLIDSSYILEVSSPGLDRPLREMKDYNRFVGRLAKIWLKDGKVLVGNIKETTENTVSIELKNGEIITFSFDQIKKGKLEIDF</sequence>
<comment type="function">
    <text evidence="1">Required for maturation of 30S ribosomal subunits.</text>
</comment>
<comment type="subcellular location">
    <subcellularLocation>
        <location evidence="1">Cytoplasm</location>
    </subcellularLocation>
</comment>
<comment type="similarity">
    <text evidence="1">Belongs to the RimP family.</text>
</comment>
<keyword id="KW-0963">Cytoplasm</keyword>
<keyword id="KW-1185">Reference proteome</keyword>
<keyword id="KW-0690">Ribosome biogenesis</keyword>
<organism>
    <name type="scientific">Pseudothermotoga lettingae (strain ATCC BAA-301 / DSM 14385 / NBRC 107922 / TMO)</name>
    <name type="common">Thermotoga lettingae</name>
    <dbReference type="NCBI Taxonomy" id="416591"/>
    <lineage>
        <taxon>Bacteria</taxon>
        <taxon>Thermotogati</taxon>
        <taxon>Thermotogota</taxon>
        <taxon>Thermotogae</taxon>
        <taxon>Thermotogales</taxon>
        <taxon>Thermotogaceae</taxon>
        <taxon>Pseudothermotoga</taxon>
    </lineage>
</organism>